<name>SGK1_BOVIN</name>
<dbReference type="EC" id="2.7.11.1"/>
<dbReference type="EMBL" id="BC151374">
    <property type="protein sequence ID" value="AAI51375.1"/>
    <property type="molecule type" value="mRNA"/>
</dbReference>
<dbReference type="RefSeq" id="NP_001095503.1">
    <property type="nucleotide sequence ID" value="NM_001102033.1"/>
</dbReference>
<dbReference type="SMR" id="A7MB74"/>
<dbReference type="FunCoup" id="A7MB74">
    <property type="interactions" value="184"/>
</dbReference>
<dbReference type="STRING" id="9913.ENSBTAP00000063519"/>
<dbReference type="PaxDb" id="9913-ENSBTAP00000005592"/>
<dbReference type="Ensembl" id="ENSBTAT00000078810.2">
    <property type="protein sequence ID" value="ENSBTAP00000070341.2"/>
    <property type="gene ID" value="ENSBTAG00000004269.6"/>
</dbReference>
<dbReference type="GeneID" id="515854"/>
<dbReference type="KEGG" id="bta:515854"/>
<dbReference type="CTD" id="6446"/>
<dbReference type="VEuPathDB" id="HostDB:ENSBTAG00000004269"/>
<dbReference type="VGNC" id="VGNC:34541">
    <property type="gene designation" value="SGK1"/>
</dbReference>
<dbReference type="eggNOG" id="KOG0598">
    <property type="taxonomic scope" value="Eukaryota"/>
</dbReference>
<dbReference type="GeneTree" id="ENSGT00940000155726"/>
<dbReference type="HOGENOM" id="CLU_000288_63_5_1"/>
<dbReference type="InParanoid" id="A7MB74"/>
<dbReference type="OrthoDB" id="63267at2759"/>
<dbReference type="TreeFam" id="TF320906"/>
<dbReference type="Proteomes" id="UP000009136">
    <property type="component" value="Chromosome 9"/>
</dbReference>
<dbReference type="Bgee" id="ENSBTAG00000004269">
    <property type="expression patterns" value="Expressed in pigment epithelium of eye and 100 other cell types or tissues"/>
</dbReference>
<dbReference type="GO" id="GO:0005737">
    <property type="term" value="C:cytoplasm"/>
    <property type="evidence" value="ECO:0000318"/>
    <property type="project" value="GO_Central"/>
</dbReference>
<dbReference type="GO" id="GO:0005789">
    <property type="term" value="C:endoplasmic reticulum membrane"/>
    <property type="evidence" value="ECO:0007669"/>
    <property type="project" value="UniProtKB-SubCell"/>
</dbReference>
<dbReference type="GO" id="GO:0005739">
    <property type="term" value="C:mitochondrion"/>
    <property type="evidence" value="ECO:0007669"/>
    <property type="project" value="UniProtKB-SubCell"/>
</dbReference>
<dbReference type="GO" id="GO:0005634">
    <property type="term" value="C:nucleus"/>
    <property type="evidence" value="ECO:0000318"/>
    <property type="project" value="GO_Central"/>
</dbReference>
<dbReference type="GO" id="GO:0005886">
    <property type="term" value="C:plasma membrane"/>
    <property type="evidence" value="ECO:0007669"/>
    <property type="project" value="UniProtKB-SubCell"/>
</dbReference>
<dbReference type="GO" id="GO:0005524">
    <property type="term" value="F:ATP binding"/>
    <property type="evidence" value="ECO:0007669"/>
    <property type="project" value="UniProtKB-KW"/>
</dbReference>
<dbReference type="GO" id="GO:0106310">
    <property type="term" value="F:protein serine kinase activity"/>
    <property type="evidence" value="ECO:0007669"/>
    <property type="project" value="RHEA"/>
</dbReference>
<dbReference type="GO" id="GO:0004674">
    <property type="term" value="F:protein serine/threonine kinase activity"/>
    <property type="evidence" value="ECO:0000318"/>
    <property type="project" value="GO_Central"/>
</dbReference>
<dbReference type="GO" id="GO:0006915">
    <property type="term" value="P:apoptotic process"/>
    <property type="evidence" value="ECO:0007669"/>
    <property type="project" value="UniProtKB-KW"/>
</dbReference>
<dbReference type="CDD" id="cd05575">
    <property type="entry name" value="STKc_SGK"/>
    <property type="match status" value="1"/>
</dbReference>
<dbReference type="FunFam" id="1.10.510.10:FF:000065">
    <property type="entry name" value="Non-specific serine/threonine protein kinase"/>
    <property type="match status" value="1"/>
</dbReference>
<dbReference type="FunFam" id="3.30.200.20:FF:000030">
    <property type="entry name" value="Non-specific serine/threonine protein kinase"/>
    <property type="match status" value="1"/>
</dbReference>
<dbReference type="Gene3D" id="3.30.200.20">
    <property type="entry name" value="Phosphorylase Kinase, domain 1"/>
    <property type="match status" value="1"/>
</dbReference>
<dbReference type="Gene3D" id="1.10.510.10">
    <property type="entry name" value="Transferase(Phosphotransferase) domain 1"/>
    <property type="match status" value="1"/>
</dbReference>
<dbReference type="InterPro" id="IPR000961">
    <property type="entry name" value="AGC-kinase_C"/>
</dbReference>
<dbReference type="InterPro" id="IPR011009">
    <property type="entry name" value="Kinase-like_dom_sf"/>
</dbReference>
<dbReference type="InterPro" id="IPR017892">
    <property type="entry name" value="Pkinase_C"/>
</dbReference>
<dbReference type="InterPro" id="IPR000719">
    <property type="entry name" value="Prot_kinase_dom"/>
</dbReference>
<dbReference type="InterPro" id="IPR017441">
    <property type="entry name" value="Protein_kinase_ATP_BS"/>
</dbReference>
<dbReference type="InterPro" id="IPR008271">
    <property type="entry name" value="Ser/Thr_kinase_AS"/>
</dbReference>
<dbReference type="PANTHER" id="PTHR24351">
    <property type="entry name" value="RIBOSOMAL PROTEIN S6 KINASE"/>
    <property type="match status" value="1"/>
</dbReference>
<dbReference type="Pfam" id="PF00069">
    <property type="entry name" value="Pkinase"/>
    <property type="match status" value="1"/>
</dbReference>
<dbReference type="Pfam" id="PF00433">
    <property type="entry name" value="Pkinase_C"/>
    <property type="match status" value="1"/>
</dbReference>
<dbReference type="SMART" id="SM00133">
    <property type="entry name" value="S_TK_X"/>
    <property type="match status" value="1"/>
</dbReference>
<dbReference type="SMART" id="SM00220">
    <property type="entry name" value="S_TKc"/>
    <property type="match status" value="1"/>
</dbReference>
<dbReference type="SUPFAM" id="SSF56112">
    <property type="entry name" value="Protein kinase-like (PK-like)"/>
    <property type="match status" value="1"/>
</dbReference>
<dbReference type="PROSITE" id="PS51285">
    <property type="entry name" value="AGC_KINASE_CTER"/>
    <property type="match status" value="1"/>
</dbReference>
<dbReference type="PROSITE" id="PS00107">
    <property type="entry name" value="PROTEIN_KINASE_ATP"/>
    <property type="match status" value="1"/>
</dbReference>
<dbReference type="PROSITE" id="PS50011">
    <property type="entry name" value="PROTEIN_KINASE_DOM"/>
    <property type="match status" value="1"/>
</dbReference>
<dbReference type="PROSITE" id="PS00108">
    <property type="entry name" value="PROTEIN_KINASE_ST"/>
    <property type="match status" value="1"/>
</dbReference>
<comment type="function">
    <text evidence="1">Serine/threonine-protein kinase which is involved in the regulation of a wide variety of ion channels, membrane transporters, cellular enzymes, transcription factors, neuronal excitability, cell growth, proliferation, survival, migration and apoptosis. Plays an important role in cellular stress response. Contributes to regulation of renal Na(+) retention, renal K(+) elimination, salt appetite, gastric acid secretion, intestinal Na(+)/H(+) exchange and nutrient transport, insulin-dependent salt sensitivity of blood pressure, salt sensitivity of peripheral glucose uptake, cardiac repolarization and memory consolidation. Up-regulates Na(+) channels: SCNN1A/ENAC, SCN5A and ASIC1/ACCN2, K(+) channels: KCNJ1/ROMK1, KCNA1-5, KCNQ1-5 and KCNE1, epithelial Ca(2+) channels: TRPV5 and TRPV6, chloride channels: BSND, CLCN2 and CFTR, glutamate transporters: SLC1A3/EAAT1, SLC1A2 /EAAT2, SLC1A1/EAAT3, SLC1A6/EAAT4 and SLC1A7/EAAT5, amino acid transporters: SLC1A5/ASCT2, SLC38A1/SN1 and SLC6A19, creatine transporter: SLC6A8, Na(+)/dicarboxylate cotransporter: SLC13A2/NADC1, Na(+)-dependent phosphate cotransporter: SLC34A2/NAPI-2B, glutamate receptor: GRIK2/GLUR6. Up-regulates carriers: SLC9A3/NHE3, SLC12A1/NKCC2, SLC12A3/NCC, SLC5A3/SMIT, SLC2A1/GLUT1, SLC5A1/SGLT1 and SLC15A2/PEPT2. Regulates enzymes: GSK3A/B, PMM2 and Na(+)/K(+) ATPase, and transcription factors: CTNNB1 and nuclear factor NF-kappa-B. Stimulates sodium transport into epithelial cells by enhancing the stability and expression of SCNN1A/ENAC. This is achieved by phosphorylating the NEDD4L ubiquitin E3 ligase, promoting its interaction with 14-3-3 proteins, thereby preventing it from binding to SCNN1A/ENAC and targeting it for degradation. Regulates store-operated Ca(+2) entry (SOCE) by stimulating ORAI1 and STIM1. Regulates KCNJ1/ROMK1 directly via its phosphorylation or indirectly via increased interaction with SLC9A3R2/NHERF2. Phosphorylates MDM2 and activates MDM2-dependent ubiquitination of p53/TP53. Phosphorylates MAPT/TAU and mediates microtubule depolymerization and neurite formation in hippocampal neurons. Phosphorylates SLC2A4/GLUT4 and up-regulates its activity. Phosphorylates APBB1/FE65 and promotes its localization to the nucleus. Phosphorylates MAPK1/ERK2 and activates it by enhancing its interaction with MAP2K1/MEK1 and MAP2K2/MEK2. Phosphorylates FBXW7 and plays an inhibitory role in the NOTCH1 signaling. Phosphorylates FOXO1 resulting in its relocalization from the nucleus to the cytoplasm. Phosphorylates FOXO3, promoting its exit from the nucleus and interference with FOXO3-dependent transcription. Phosphorylates BRAF and MAP3K3/MEKK3 and inhibits their activity. Phosphorylates SLC9A3/NHE3 in response to dexamethasone, resulting in its activation and increased localization at the cell membrane. Phosphorylates CREB1. Necessary for vascular remodeling during angiogenesis (By similarity).</text>
</comment>
<comment type="catalytic activity">
    <reaction>
        <text>L-seryl-[protein] + ATP = O-phospho-L-seryl-[protein] + ADP + H(+)</text>
        <dbReference type="Rhea" id="RHEA:17989"/>
        <dbReference type="Rhea" id="RHEA-COMP:9863"/>
        <dbReference type="Rhea" id="RHEA-COMP:11604"/>
        <dbReference type="ChEBI" id="CHEBI:15378"/>
        <dbReference type="ChEBI" id="CHEBI:29999"/>
        <dbReference type="ChEBI" id="CHEBI:30616"/>
        <dbReference type="ChEBI" id="CHEBI:83421"/>
        <dbReference type="ChEBI" id="CHEBI:456216"/>
        <dbReference type="EC" id="2.7.11.1"/>
    </reaction>
</comment>
<comment type="catalytic activity">
    <reaction>
        <text>L-threonyl-[protein] + ATP = O-phospho-L-threonyl-[protein] + ADP + H(+)</text>
        <dbReference type="Rhea" id="RHEA:46608"/>
        <dbReference type="Rhea" id="RHEA-COMP:11060"/>
        <dbReference type="Rhea" id="RHEA-COMP:11605"/>
        <dbReference type="ChEBI" id="CHEBI:15378"/>
        <dbReference type="ChEBI" id="CHEBI:30013"/>
        <dbReference type="ChEBI" id="CHEBI:30616"/>
        <dbReference type="ChEBI" id="CHEBI:61977"/>
        <dbReference type="ChEBI" id="CHEBI:456216"/>
        <dbReference type="EC" id="2.7.11.1"/>
    </reaction>
</comment>
<comment type="activity regulation">
    <text evidence="2 3">Two specific sites, one in the kinase domain (Thr-256) and the other in the C-terminal regulatory region (Ser-422), need to be phosphorylated for its full activation (By similarity). Phosphorylation at Ser-397 and Ser-401 are also essential for its activity (By similarity). Activated by WNK1, WNK2, WNK3 and WNK4; which promote phosphorylation by mTORC2 (By similarity).</text>
</comment>
<comment type="subunit">
    <text evidence="2">Homodimer; disulfide-linked. Forms a trimeric complex with FBXW7 and NOTCH1. Interacts with MAPK3/ERK1, MAPK1/ERK2, MAP2K1/MEK1, MAP2K2/MEK2, NEDD4, NEDD4L, MAPT/TAU, MAPK7, CREB1, SLC9A3R2/NHERF2 and KCNJ1/ROMK1. Associates with the mammalian target of rapamycin complex 2 (mTORC2) via an interaction with MAPKAP1/SIN1 (By similarity).</text>
</comment>
<comment type="subcellular location">
    <subcellularLocation>
        <location evidence="1">Cytoplasm</location>
    </subcellularLocation>
    <subcellularLocation>
        <location evidence="1">Nucleus</location>
    </subcellularLocation>
    <subcellularLocation>
        <location evidence="1">Endoplasmic reticulum membrane</location>
    </subcellularLocation>
    <subcellularLocation>
        <location evidence="1">Cell membrane</location>
    </subcellularLocation>
    <subcellularLocation>
        <location evidence="1">Mitochondrion</location>
    </subcellularLocation>
    <text evidence="1">The subcellular localization is controlled by the cell cycle, as well as by exposure to specific hormones and environmental stress stimuli. In proliferating cells, it shuttles between the nucleus and cytoplasm in synchrony with the cell cycle, and in serum/growth factor-stimulated cells it resides in the nucleus. In contrast, after exposure to environmental stress or treatment with glucocorticoids, it is detected in the cytoplasm and with certain stress conditions is associated with the mitochondria. In osmoregulation through the epithelial sodium channel, it can be localized to the cytoplasmic surface of the cell membrane. Nuclear, upon phosphorylation (By similarity).</text>
</comment>
<comment type="PTM">
    <text evidence="1">Regulated by phosphorylation. Activated by phosphorylation on Ser-422 by mTORC2, transforming it into a substrate for PDPK1 which phosphorylates it on Thr-256. Phosphorylation on Ser-397 and Ser-401 are also essential for its activity. Phosphorylation on Ser-78 by MAPK7 is required for growth factor-induced cell cycle progression (By similarity).</text>
</comment>
<comment type="PTM">
    <text evidence="1">Ubiquitinated by NEDD4L; which promotes proteasomal degradation. Ubiquitinated by SYVN1 at the endoplasmic reticulum; which promotes rapid proteasomal degradation and maintains a high turnover rate in resting cells (By similarity).</text>
</comment>
<comment type="similarity">
    <text evidence="8">Belongs to the protein kinase superfamily. AGC Ser/Thr protein kinase family.</text>
</comment>
<organism>
    <name type="scientific">Bos taurus</name>
    <name type="common">Bovine</name>
    <dbReference type="NCBI Taxonomy" id="9913"/>
    <lineage>
        <taxon>Eukaryota</taxon>
        <taxon>Metazoa</taxon>
        <taxon>Chordata</taxon>
        <taxon>Craniata</taxon>
        <taxon>Vertebrata</taxon>
        <taxon>Euteleostomi</taxon>
        <taxon>Mammalia</taxon>
        <taxon>Eutheria</taxon>
        <taxon>Laurasiatheria</taxon>
        <taxon>Artiodactyla</taxon>
        <taxon>Ruminantia</taxon>
        <taxon>Pecora</taxon>
        <taxon>Bovidae</taxon>
        <taxon>Bovinae</taxon>
        <taxon>Bos</taxon>
    </lineage>
</organism>
<protein>
    <recommendedName>
        <fullName>Serine/threonine-protein kinase Sgk1</fullName>
        <ecNumber>2.7.11.1</ecNumber>
    </recommendedName>
    <alternativeName>
        <fullName>Serum/glucocorticoid-regulated kinase 1</fullName>
    </alternativeName>
</protein>
<sequence length="431" mass="49026">MTVKTEAARDTLTYSRMRGMVAILIAFMKQRRMGLNDFIQKIANNSYACKHPEVQSILKISPPQEPELMNANPSPPPSPSQQINLGPSSNPHAKPSDFHFLKVIGKGSFGKVLLARHKAEEAFYAVKVLQKKAILKKKEEKHIMSERNVLLKNVKHPFLVGLHFSFQTADKLYFVLDYINGGELFYHLQRERCFLEPRARFYAAEIASALGYLHSLNIVYRDLKPENILLDSQGHIVLTDFGLCKENIEHNGTTSTFCGTPEYLAPEVLHKQPYDRTVDWWCLGAVLYEMLYGLPPFYSRNTAEMYDNILNKPLQLKPNITNSARHVLEGLLQKDRTKRLGAKDDFMEIKNHVFFSLINWEDLINKKITPPFNPNVSGPSDLRHFDPEFTEEPVPNSIGRSPDSLLLTASVKEAAEAFLGFSYAPPMDSFL</sequence>
<feature type="chain" id="PRO_0000380128" description="Serine/threonine-protein kinase Sgk1">
    <location>
        <begin position="1"/>
        <end position="431"/>
    </location>
</feature>
<feature type="domain" description="Protein kinase" evidence="4">
    <location>
        <begin position="98"/>
        <end position="355"/>
    </location>
</feature>
<feature type="domain" description="AGC-kinase C-terminal" evidence="5">
    <location>
        <begin position="356"/>
        <end position="431"/>
    </location>
</feature>
<feature type="region of interest" description="Necessary for localization to the mitochondria" evidence="1">
    <location>
        <begin position="1"/>
        <end position="60"/>
    </location>
</feature>
<feature type="region of interest" description="Disordered" evidence="7">
    <location>
        <begin position="64"/>
        <end position="92"/>
    </location>
</feature>
<feature type="short sequence motif" description="Nuclear localization signal" evidence="1">
    <location>
        <begin position="131"/>
        <end position="141"/>
    </location>
</feature>
<feature type="compositionally biased region" description="Polar residues" evidence="7">
    <location>
        <begin position="81"/>
        <end position="91"/>
    </location>
</feature>
<feature type="active site" description="Proton acceptor" evidence="4 6">
    <location>
        <position position="222"/>
    </location>
</feature>
<feature type="binding site" evidence="4">
    <location>
        <begin position="104"/>
        <end position="112"/>
    </location>
    <ligand>
        <name>ATP</name>
        <dbReference type="ChEBI" id="CHEBI:30616"/>
    </ligand>
</feature>
<feature type="binding site" evidence="4">
    <location>
        <position position="127"/>
    </location>
    <ligand>
        <name>ATP</name>
        <dbReference type="ChEBI" id="CHEBI:30616"/>
    </ligand>
</feature>
<feature type="modified residue" description="Phosphoserine" evidence="2">
    <location>
        <position position="74"/>
    </location>
</feature>
<feature type="modified residue" description="Phosphoserine; by MAPK7" evidence="2">
    <location>
        <position position="78"/>
    </location>
</feature>
<feature type="modified residue" description="Phosphothreonine; by PDPK1" evidence="2">
    <location>
        <position position="256"/>
    </location>
</feature>
<feature type="modified residue" description="Phosphothreonine; by PKA" evidence="2">
    <location>
        <position position="369"/>
    </location>
</feature>
<feature type="modified residue" description="Phosphoserine" evidence="2">
    <location>
        <position position="397"/>
    </location>
</feature>
<feature type="modified residue" description="Phosphoserine" evidence="2">
    <location>
        <position position="401"/>
    </location>
</feature>
<feature type="modified residue" description="Phosphoserine" evidence="2">
    <location>
        <position position="422"/>
    </location>
</feature>
<feature type="disulfide bond" description="Interchain (with C-258)" evidence="2">
    <location>
        <position position="193"/>
    </location>
</feature>
<feature type="disulfide bond" description="Interchain (with C-193)" evidence="2">
    <location>
        <position position="258"/>
    </location>
</feature>
<gene>
    <name type="primary">SGK1</name>
    <name type="synonym">SGK</name>
</gene>
<reference key="1">
    <citation type="submission" date="2007-07" db="EMBL/GenBank/DDBJ databases">
        <authorList>
            <consortium name="NIH - Mammalian Gene Collection (MGC) project"/>
        </authorList>
    </citation>
    <scope>NUCLEOTIDE SEQUENCE [LARGE SCALE MRNA]</scope>
    <source>
        <strain>Hereford</strain>
        <tissue>Fetal muscle</tissue>
    </source>
</reference>
<accession>A7MB74</accession>
<proteinExistence type="evidence at transcript level"/>
<evidence type="ECO:0000250" key="1"/>
<evidence type="ECO:0000250" key="2">
    <source>
        <dbReference type="UniProtKB" id="O00141"/>
    </source>
</evidence>
<evidence type="ECO:0000250" key="3">
    <source>
        <dbReference type="UniProtKB" id="Q9WVC6"/>
    </source>
</evidence>
<evidence type="ECO:0000255" key="4">
    <source>
        <dbReference type="PROSITE-ProRule" id="PRU00159"/>
    </source>
</evidence>
<evidence type="ECO:0000255" key="5">
    <source>
        <dbReference type="PROSITE-ProRule" id="PRU00618"/>
    </source>
</evidence>
<evidence type="ECO:0000255" key="6">
    <source>
        <dbReference type="PROSITE-ProRule" id="PRU10027"/>
    </source>
</evidence>
<evidence type="ECO:0000256" key="7">
    <source>
        <dbReference type="SAM" id="MobiDB-lite"/>
    </source>
</evidence>
<evidence type="ECO:0000305" key="8"/>
<keyword id="KW-0053">Apoptosis</keyword>
<keyword id="KW-0067">ATP-binding</keyword>
<keyword id="KW-1003">Cell membrane</keyword>
<keyword id="KW-0963">Cytoplasm</keyword>
<keyword id="KW-1015">Disulfide bond</keyword>
<keyword id="KW-0256">Endoplasmic reticulum</keyword>
<keyword id="KW-0418">Kinase</keyword>
<keyword id="KW-0472">Membrane</keyword>
<keyword id="KW-0496">Mitochondrion</keyword>
<keyword id="KW-0547">Nucleotide-binding</keyword>
<keyword id="KW-0539">Nucleus</keyword>
<keyword id="KW-0597">Phosphoprotein</keyword>
<keyword id="KW-1185">Reference proteome</keyword>
<keyword id="KW-0723">Serine/threonine-protein kinase</keyword>
<keyword id="KW-0346">Stress response</keyword>
<keyword id="KW-0808">Transferase</keyword>
<keyword id="KW-0832">Ubl conjugation</keyword>